<name>TRUB_NITWN</name>
<organism>
    <name type="scientific">Nitrobacter winogradskyi (strain ATCC 25391 / DSM 10237 / CIP 104748 / NCIMB 11846 / Nb-255)</name>
    <dbReference type="NCBI Taxonomy" id="323098"/>
    <lineage>
        <taxon>Bacteria</taxon>
        <taxon>Pseudomonadati</taxon>
        <taxon>Pseudomonadota</taxon>
        <taxon>Alphaproteobacteria</taxon>
        <taxon>Hyphomicrobiales</taxon>
        <taxon>Nitrobacteraceae</taxon>
        <taxon>Nitrobacter</taxon>
    </lineage>
</organism>
<sequence length="358" mass="38377">MTTPDAAIDSKISDSNGADKNKSAADDNAFNAPGRKRHHNNQPRRDKRDVHGWVALDKPVGMTSTQAVAVVKRLFSAKRAGHAGTLDPLASGGLPIALGEATKTVPFVMDGRKRYRFTVAWGEERDTDDTEGRAVATSAERPTAEAIMALLPSFTGKIEQIPPQYSAVKIQGERAYDLARDGEVVPLAPRPVEIHHLNLADHQDSGHSVFEAECGKGTYVRALARDMGRLLGCYGHICALRRTLVGPFDETSMIPLEHLQALCDRAASGEGNLADALLPVETALDDIPALAVTRADAARLHRGQAVLLRGRDAPNMSGTVYVTVAGRLLALAELGNGELIPKRVFNLSGLTASPHRQG</sequence>
<gene>
    <name evidence="1" type="primary">truB</name>
    <name type="ordered locus">Nwi_0026</name>
</gene>
<keyword id="KW-0413">Isomerase</keyword>
<keyword id="KW-1185">Reference proteome</keyword>
<keyword id="KW-0819">tRNA processing</keyword>
<protein>
    <recommendedName>
        <fullName evidence="1">tRNA pseudouridine synthase B</fullName>
        <ecNumber evidence="1">5.4.99.25</ecNumber>
    </recommendedName>
    <alternativeName>
        <fullName evidence="1">tRNA pseudouridine(55) synthase</fullName>
        <shortName evidence="1">Psi55 synthase</shortName>
    </alternativeName>
    <alternativeName>
        <fullName evidence="1">tRNA pseudouridylate synthase</fullName>
    </alternativeName>
    <alternativeName>
        <fullName evidence="1">tRNA-uridine isomerase</fullName>
    </alternativeName>
</protein>
<comment type="function">
    <text evidence="1">Responsible for synthesis of pseudouridine from uracil-55 in the psi GC loop of transfer RNAs.</text>
</comment>
<comment type="catalytic activity">
    <reaction evidence="1">
        <text>uridine(55) in tRNA = pseudouridine(55) in tRNA</text>
        <dbReference type="Rhea" id="RHEA:42532"/>
        <dbReference type="Rhea" id="RHEA-COMP:10101"/>
        <dbReference type="Rhea" id="RHEA-COMP:10102"/>
        <dbReference type="ChEBI" id="CHEBI:65314"/>
        <dbReference type="ChEBI" id="CHEBI:65315"/>
        <dbReference type="EC" id="5.4.99.25"/>
    </reaction>
</comment>
<comment type="similarity">
    <text evidence="1">Belongs to the pseudouridine synthase TruB family. Type 1 subfamily.</text>
</comment>
<reference key="1">
    <citation type="journal article" date="2006" name="Appl. Environ. Microbiol.">
        <title>Genome sequence of the chemolithoautotrophic nitrite-oxidizing bacterium Nitrobacter winogradskyi Nb-255.</title>
        <authorList>
            <person name="Starkenburg S.R."/>
            <person name="Chain P.S.G."/>
            <person name="Sayavedra-Soto L.A."/>
            <person name="Hauser L."/>
            <person name="Land M.L."/>
            <person name="Larimer F.W."/>
            <person name="Malfatti S.A."/>
            <person name="Klotz M.G."/>
            <person name="Bottomley P.J."/>
            <person name="Arp D.J."/>
            <person name="Hickey W.J."/>
        </authorList>
    </citation>
    <scope>NUCLEOTIDE SEQUENCE [LARGE SCALE GENOMIC DNA]</scope>
    <source>
        <strain>ATCC 25391 / DSM 10237 / CIP 104748 / NCIMB 11846 / Nb-255</strain>
    </source>
</reference>
<feature type="chain" id="PRO_0000229363" description="tRNA pseudouridine synthase B">
    <location>
        <begin position="1"/>
        <end position="358"/>
    </location>
</feature>
<feature type="region of interest" description="Disordered" evidence="2">
    <location>
        <begin position="1"/>
        <end position="50"/>
    </location>
</feature>
<feature type="active site" description="Nucleophile" evidence="1">
    <location>
        <position position="87"/>
    </location>
</feature>
<accession>Q3SWP7</accession>
<dbReference type="EC" id="5.4.99.25" evidence="1"/>
<dbReference type="EMBL" id="CP000115">
    <property type="protein sequence ID" value="ABA03294.1"/>
    <property type="molecule type" value="Genomic_DNA"/>
</dbReference>
<dbReference type="RefSeq" id="WP_011313365.1">
    <property type="nucleotide sequence ID" value="NC_007406.1"/>
</dbReference>
<dbReference type="SMR" id="Q3SWP7"/>
<dbReference type="STRING" id="323098.Nwi_0026"/>
<dbReference type="KEGG" id="nwi:Nwi_0026"/>
<dbReference type="eggNOG" id="COG0130">
    <property type="taxonomic scope" value="Bacteria"/>
</dbReference>
<dbReference type="HOGENOM" id="CLU_032087_0_3_5"/>
<dbReference type="OrthoDB" id="9802309at2"/>
<dbReference type="Proteomes" id="UP000002531">
    <property type="component" value="Chromosome"/>
</dbReference>
<dbReference type="GO" id="GO:0003723">
    <property type="term" value="F:RNA binding"/>
    <property type="evidence" value="ECO:0007669"/>
    <property type="project" value="InterPro"/>
</dbReference>
<dbReference type="GO" id="GO:0160148">
    <property type="term" value="F:tRNA pseudouridine(55) synthase activity"/>
    <property type="evidence" value="ECO:0007669"/>
    <property type="project" value="UniProtKB-EC"/>
</dbReference>
<dbReference type="GO" id="GO:1990481">
    <property type="term" value="P:mRNA pseudouridine synthesis"/>
    <property type="evidence" value="ECO:0007669"/>
    <property type="project" value="TreeGrafter"/>
</dbReference>
<dbReference type="GO" id="GO:0031119">
    <property type="term" value="P:tRNA pseudouridine synthesis"/>
    <property type="evidence" value="ECO:0007669"/>
    <property type="project" value="UniProtKB-UniRule"/>
</dbReference>
<dbReference type="CDD" id="cd02573">
    <property type="entry name" value="PseudoU_synth_EcTruB"/>
    <property type="match status" value="1"/>
</dbReference>
<dbReference type="Gene3D" id="3.30.2350.10">
    <property type="entry name" value="Pseudouridine synthase"/>
    <property type="match status" value="1"/>
</dbReference>
<dbReference type="HAMAP" id="MF_01080">
    <property type="entry name" value="TruB_bact"/>
    <property type="match status" value="1"/>
</dbReference>
<dbReference type="InterPro" id="IPR020103">
    <property type="entry name" value="PsdUridine_synth_cat_dom_sf"/>
</dbReference>
<dbReference type="InterPro" id="IPR002501">
    <property type="entry name" value="PsdUridine_synth_N"/>
</dbReference>
<dbReference type="InterPro" id="IPR014780">
    <property type="entry name" value="tRNA_psdUridine_synth_TruB"/>
</dbReference>
<dbReference type="InterPro" id="IPR032819">
    <property type="entry name" value="TruB_C"/>
</dbReference>
<dbReference type="NCBIfam" id="TIGR00431">
    <property type="entry name" value="TruB"/>
    <property type="match status" value="1"/>
</dbReference>
<dbReference type="PANTHER" id="PTHR13767:SF2">
    <property type="entry name" value="PSEUDOURIDYLATE SYNTHASE TRUB1"/>
    <property type="match status" value="1"/>
</dbReference>
<dbReference type="PANTHER" id="PTHR13767">
    <property type="entry name" value="TRNA-PSEUDOURIDINE SYNTHASE"/>
    <property type="match status" value="1"/>
</dbReference>
<dbReference type="Pfam" id="PF16198">
    <property type="entry name" value="TruB_C_2"/>
    <property type="match status" value="1"/>
</dbReference>
<dbReference type="Pfam" id="PF01509">
    <property type="entry name" value="TruB_N"/>
    <property type="match status" value="1"/>
</dbReference>
<dbReference type="SUPFAM" id="SSF55120">
    <property type="entry name" value="Pseudouridine synthase"/>
    <property type="match status" value="1"/>
</dbReference>
<proteinExistence type="inferred from homology"/>
<evidence type="ECO:0000255" key="1">
    <source>
        <dbReference type="HAMAP-Rule" id="MF_01080"/>
    </source>
</evidence>
<evidence type="ECO:0000256" key="2">
    <source>
        <dbReference type="SAM" id="MobiDB-lite"/>
    </source>
</evidence>